<gene>
    <name type="primary">EXPB11</name>
</gene>
<dbReference type="EMBL" id="AY104999">
    <property type="status" value="NOT_ANNOTATED_CDS"/>
    <property type="molecule type" value="mRNA"/>
</dbReference>
<dbReference type="SMR" id="P0C1Y5"/>
<dbReference type="FunCoup" id="P0C1Y5">
    <property type="interactions" value="33"/>
</dbReference>
<dbReference type="STRING" id="4577.P0C1Y5"/>
<dbReference type="Allergome" id="680">
    <property type="allergen name" value="Zea m 1"/>
</dbReference>
<dbReference type="GlyCosmos" id="P0C1Y5">
    <property type="glycosylation" value="1 site, No reported glycans"/>
</dbReference>
<dbReference type="PaxDb" id="4577-GRMZM2G089699_P01"/>
<dbReference type="eggNOG" id="ENOG502QRTE">
    <property type="taxonomic scope" value="Eukaryota"/>
</dbReference>
<dbReference type="InParanoid" id="P0C1Y5"/>
<dbReference type="OMA" id="CKYPTGT"/>
<dbReference type="OrthoDB" id="644057at2759"/>
<dbReference type="Proteomes" id="UP000007305">
    <property type="component" value="Unplaced"/>
</dbReference>
<dbReference type="ExpressionAtlas" id="P0C1Y5">
    <property type="expression patterns" value="baseline and differential"/>
</dbReference>
<dbReference type="GO" id="GO:0005576">
    <property type="term" value="C:extracellular region"/>
    <property type="evidence" value="ECO:0007669"/>
    <property type="project" value="UniProtKB-KW"/>
</dbReference>
<dbReference type="GO" id="GO:0016020">
    <property type="term" value="C:membrane"/>
    <property type="evidence" value="ECO:0007669"/>
    <property type="project" value="UniProtKB-SubCell"/>
</dbReference>
<dbReference type="GO" id="GO:0009828">
    <property type="term" value="P:plant-type cell wall loosening"/>
    <property type="evidence" value="ECO:0000250"/>
    <property type="project" value="UniProtKB"/>
</dbReference>
<dbReference type="GO" id="GO:0019953">
    <property type="term" value="P:sexual reproduction"/>
    <property type="evidence" value="ECO:0007669"/>
    <property type="project" value="InterPro"/>
</dbReference>
<dbReference type="CDD" id="cd22275">
    <property type="entry name" value="DPBB_EXPB_N"/>
    <property type="match status" value="1"/>
</dbReference>
<dbReference type="Gene3D" id="2.60.40.760">
    <property type="entry name" value="Expansin, cellulose-binding-like domain"/>
    <property type="match status" value="1"/>
</dbReference>
<dbReference type="Gene3D" id="2.40.40.10">
    <property type="entry name" value="RlpA-like domain"/>
    <property type="match status" value="1"/>
</dbReference>
<dbReference type="InterPro" id="IPR007118">
    <property type="entry name" value="Expan_Lol_pI"/>
</dbReference>
<dbReference type="InterPro" id="IPR007112">
    <property type="entry name" value="Expansin/allergen_DPBB_dom"/>
</dbReference>
<dbReference type="InterPro" id="IPR007117">
    <property type="entry name" value="Expansin_CBD"/>
</dbReference>
<dbReference type="InterPro" id="IPR036749">
    <property type="entry name" value="Expansin_CBD_sf"/>
</dbReference>
<dbReference type="InterPro" id="IPR005795">
    <property type="entry name" value="LolPI"/>
</dbReference>
<dbReference type="InterPro" id="IPR009009">
    <property type="entry name" value="RlpA-like_DPBB"/>
</dbReference>
<dbReference type="InterPro" id="IPR036908">
    <property type="entry name" value="RlpA-like_sf"/>
</dbReference>
<dbReference type="PANTHER" id="PTHR31692:SF21">
    <property type="entry name" value="EXPANSIN-B1"/>
    <property type="match status" value="1"/>
</dbReference>
<dbReference type="PANTHER" id="PTHR31692">
    <property type="entry name" value="EXPANSIN-B3"/>
    <property type="match status" value="1"/>
</dbReference>
<dbReference type="Pfam" id="PF03330">
    <property type="entry name" value="DPBB_1"/>
    <property type="match status" value="1"/>
</dbReference>
<dbReference type="Pfam" id="PF01357">
    <property type="entry name" value="Expansin_C"/>
    <property type="match status" value="1"/>
</dbReference>
<dbReference type="PRINTS" id="PR01225">
    <property type="entry name" value="EXPANSNFAMLY"/>
</dbReference>
<dbReference type="PRINTS" id="PR00829">
    <property type="entry name" value="LOLP1ALLERGN"/>
</dbReference>
<dbReference type="SMART" id="SM00837">
    <property type="entry name" value="DPBB_1"/>
    <property type="match status" value="1"/>
</dbReference>
<dbReference type="SUPFAM" id="SSF50685">
    <property type="entry name" value="Barwin-like endoglucanases"/>
    <property type="match status" value="1"/>
</dbReference>
<dbReference type="SUPFAM" id="SSF49590">
    <property type="entry name" value="PHL pollen allergen"/>
    <property type="match status" value="1"/>
</dbReference>
<dbReference type="PROSITE" id="PS50843">
    <property type="entry name" value="EXPANSIN_CBD"/>
    <property type="match status" value="1"/>
</dbReference>
<dbReference type="PROSITE" id="PS50842">
    <property type="entry name" value="EXPANSIN_EG45"/>
    <property type="match status" value="1"/>
</dbReference>
<protein>
    <recommendedName>
        <fullName>Expansin-B11</fullName>
    </recommendedName>
    <alternativeName>
        <fullName>Beta-expansin-11</fullName>
    </alternativeName>
    <alternativeName>
        <fullName>Pollen allergen Zea m 1a</fullName>
    </alternativeName>
    <alternativeName>
        <fullName>Pollen allergen Zea m 1b</fullName>
    </alternativeName>
    <alternativeName>
        <fullName>ZmEXPB11</fullName>
    </alternativeName>
    <allergenName>Zea m 1</allergenName>
</protein>
<name>EXB11_MAIZE</name>
<accession>P0C1Y5</accession>
<feature type="signal peptide" evidence="5">
    <location>
        <begin position="1"/>
        <end position="30"/>
    </location>
</feature>
<feature type="chain" id="PRO_0000252097" description="Expansin-B11">
    <location>
        <begin position="31"/>
        <end position="269"/>
    </location>
</feature>
<feature type="domain" description="Expansin-like EG45" evidence="4">
    <location>
        <begin position="69"/>
        <end position="175"/>
    </location>
</feature>
<feature type="domain" description="Expansin-like CBD" evidence="3">
    <location>
        <begin position="187"/>
        <end position="268"/>
    </location>
</feature>
<feature type="glycosylation site" description="N-linked (GlcNAc...) asparagine" evidence="2">
    <location>
        <position position="40"/>
    </location>
</feature>
<feature type="disulfide bond" evidence="4">
    <location>
        <begin position="72"/>
        <end position="100"/>
    </location>
</feature>
<feature type="disulfide bond" evidence="4">
    <location>
        <begin position="103"/>
        <end position="170"/>
    </location>
</feature>
<feature type="disulfide bond" evidence="4">
    <location>
        <begin position="108"/>
        <end position="114"/>
    </location>
</feature>
<organism>
    <name type="scientific">Zea mays</name>
    <name type="common">Maize</name>
    <dbReference type="NCBI Taxonomy" id="4577"/>
    <lineage>
        <taxon>Eukaryota</taxon>
        <taxon>Viridiplantae</taxon>
        <taxon>Streptophyta</taxon>
        <taxon>Embryophyta</taxon>
        <taxon>Tracheophyta</taxon>
        <taxon>Spermatophyta</taxon>
        <taxon>Magnoliopsida</taxon>
        <taxon>Liliopsida</taxon>
        <taxon>Poales</taxon>
        <taxon>Poaceae</taxon>
        <taxon>PACMAD clade</taxon>
        <taxon>Panicoideae</taxon>
        <taxon>Andropogonodae</taxon>
        <taxon>Andropogoneae</taxon>
        <taxon>Tripsacinae</taxon>
        <taxon>Zea</taxon>
    </lineage>
</organism>
<proteinExistence type="evidence at protein level"/>
<reference key="1">
    <citation type="journal article" date="2003" name="Plant Physiol.">
        <title>Purification and characterization of four beta-expansins (Zea m 1 isoforms) from maize pollen.</title>
        <authorList>
            <person name="Li L.-C."/>
            <person name="Bedinger P.A."/>
            <person name="Volk C."/>
            <person name="Jones A.D."/>
            <person name="Cosgrove D.J."/>
        </authorList>
    </citation>
    <scope>NUCLEOTIDE SEQUENCE [MRNA]</scope>
    <scope>PROTEIN SEQUENCE OF 31-50</scope>
    <scope>TISSUE SPECIFICITY</scope>
</reference>
<reference key="2">
    <citation type="journal article" date="2004" name="Plant Physiol.">
        <title>Anchoring 9,371 maize expressed sequence tagged unigenes to the bacterial artificial chromosome contig map by two-dimensional overgo hybridization.</title>
        <authorList>
            <person name="Gardiner J."/>
            <person name="Schroeder S."/>
            <person name="Polacco M.L."/>
            <person name="Sanchez-Villeda H."/>
            <person name="Fang Z."/>
            <person name="Morgante M."/>
            <person name="Landewe T."/>
            <person name="Fengler K."/>
            <person name="Useche F."/>
            <person name="Hanafey M."/>
            <person name="Tingey S."/>
            <person name="Chou H."/>
            <person name="Wing R."/>
            <person name="Soderlund C."/>
            <person name="Coe E.H. Jr."/>
        </authorList>
    </citation>
    <scope>NUCLEOTIDE SEQUENCE [MRNA]</scope>
</reference>
<reference key="3">
    <citation type="journal article" date="2004" name="Plant Mol. Biol.">
        <title>Nomenclature for members of the expansin superfamily of genes and proteins.</title>
        <authorList>
            <person name="Kende H."/>
            <person name="Bradford K.J."/>
            <person name="Brummell D.A."/>
            <person name="Cho H.-T."/>
            <person name="Cosgrove D.J."/>
            <person name="Fleming A.J."/>
            <person name="Gehring C."/>
            <person name="Lee Y."/>
            <person name="McQueen-Mason S.J."/>
            <person name="Rose J.K.C."/>
            <person name="Voesenek L.A.C."/>
        </authorList>
    </citation>
    <scope>NOMENCLATURE</scope>
</reference>
<comment type="function">
    <text evidence="1">May aid fertilization by loosening the cell wall of the stigma and style, thereby facilitating penetration of the pollen tube. Acts selectively on grass cell walls, which are relatively poor in pectins and xyloglucans and rich in glucuronoarabinoxylans and (1-3),(1-4)-beta-D-glucans, when compared with cell walls of other angiosperms, including other monocots (By similarity).</text>
</comment>
<comment type="subcellular location">
    <subcellularLocation>
        <location evidence="1">Secreted</location>
        <location evidence="1">Cell wall</location>
    </subcellularLocation>
    <subcellularLocation>
        <location evidence="1">Membrane</location>
        <topology evidence="1">Peripheral membrane protein</topology>
    </subcellularLocation>
</comment>
<comment type="tissue specificity">
    <text evidence="5">Expressed in pollen.</text>
</comment>
<comment type="allergen">
    <text evidence="1">Causes an allergic reaction in human. Causes maize pollen allergy (By similarity).</text>
</comment>
<comment type="similarity">
    <text evidence="6">Belongs to the expansin family. Expansin B subfamily.</text>
</comment>
<comment type="online information" name="EXPANSIN homepage">
    <link uri="https://www.dept.psu.edu/biology/groups/expansins/index.htm"/>
</comment>
<keyword id="KW-0020">Allergen</keyword>
<keyword id="KW-0134">Cell wall</keyword>
<keyword id="KW-0961">Cell wall biogenesis/degradation</keyword>
<keyword id="KW-0903">Direct protein sequencing</keyword>
<keyword id="KW-1015">Disulfide bond</keyword>
<keyword id="KW-0325">Glycoprotein</keyword>
<keyword id="KW-0472">Membrane</keyword>
<keyword id="KW-1185">Reference proteome</keyword>
<keyword id="KW-0964">Secreted</keyword>
<keyword id="KW-0732">Signal</keyword>
<sequence>MTVVSIMWSLVQVQVLVAVALAFLVGGAWCGPPKVPPGKNITAKYGSDWLDAKATWYGKPTGAGPDDNGGGCGYKDVNKAPFNSMGACGNVPIFKDGLGCGSCFEIKCDKPAECSGKPVVVYITDMNYEPIAAYHFDLAGTAFGAMAKKGEEEKLRKAGIIDMQFRRVKCKYGSKVTFHLEKGCNPNYLALLVKYVDGDGDIVAVDIKEKGSDTYEPLKHSWGAIWRKDSDKPIKGPITVQLTTEGGTKTVYDDVIPAGWKPNTAYTAK</sequence>
<evidence type="ECO:0000250" key="1"/>
<evidence type="ECO:0000255" key="2"/>
<evidence type="ECO:0000255" key="3">
    <source>
        <dbReference type="PROSITE-ProRule" id="PRU00078"/>
    </source>
</evidence>
<evidence type="ECO:0000255" key="4">
    <source>
        <dbReference type="PROSITE-ProRule" id="PRU00079"/>
    </source>
</evidence>
<evidence type="ECO:0000269" key="5">
    <source>
    </source>
</evidence>
<evidence type="ECO:0000305" key="6"/>